<dbReference type="EC" id="2.1.2.11" evidence="1"/>
<dbReference type="EMBL" id="CP001132">
    <property type="protein sequence ID" value="ACH83678.1"/>
    <property type="molecule type" value="Genomic_DNA"/>
</dbReference>
<dbReference type="RefSeq" id="WP_009561698.1">
    <property type="nucleotide sequence ID" value="NC_011206.1"/>
</dbReference>
<dbReference type="SMR" id="B5ES07"/>
<dbReference type="GeneID" id="65280940"/>
<dbReference type="KEGG" id="afe:Lferr_1447"/>
<dbReference type="eggNOG" id="COG0413">
    <property type="taxonomic scope" value="Bacteria"/>
</dbReference>
<dbReference type="HOGENOM" id="CLU_036645_1_0_6"/>
<dbReference type="UniPathway" id="UPA00028">
    <property type="reaction ID" value="UER00003"/>
</dbReference>
<dbReference type="GO" id="GO:0005737">
    <property type="term" value="C:cytoplasm"/>
    <property type="evidence" value="ECO:0007669"/>
    <property type="project" value="UniProtKB-SubCell"/>
</dbReference>
<dbReference type="GO" id="GO:0003864">
    <property type="term" value="F:3-methyl-2-oxobutanoate hydroxymethyltransferase activity"/>
    <property type="evidence" value="ECO:0007669"/>
    <property type="project" value="UniProtKB-UniRule"/>
</dbReference>
<dbReference type="GO" id="GO:0000287">
    <property type="term" value="F:magnesium ion binding"/>
    <property type="evidence" value="ECO:0007669"/>
    <property type="project" value="TreeGrafter"/>
</dbReference>
<dbReference type="GO" id="GO:0015940">
    <property type="term" value="P:pantothenate biosynthetic process"/>
    <property type="evidence" value="ECO:0007669"/>
    <property type="project" value="UniProtKB-UniRule"/>
</dbReference>
<dbReference type="CDD" id="cd06557">
    <property type="entry name" value="KPHMT-like"/>
    <property type="match status" value="1"/>
</dbReference>
<dbReference type="FunFam" id="3.20.20.60:FF:000003">
    <property type="entry name" value="3-methyl-2-oxobutanoate hydroxymethyltransferase"/>
    <property type="match status" value="1"/>
</dbReference>
<dbReference type="Gene3D" id="3.20.20.60">
    <property type="entry name" value="Phosphoenolpyruvate-binding domains"/>
    <property type="match status" value="1"/>
</dbReference>
<dbReference type="HAMAP" id="MF_00156">
    <property type="entry name" value="PanB"/>
    <property type="match status" value="1"/>
</dbReference>
<dbReference type="InterPro" id="IPR003700">
    <property type="entry name" value="Pantoate_hydroxy_MeTrfase"/>
</dbReference>
<dbReference type="InterPro" id="IPR015813">
    <property type="entry name" value="Pyrv/PenolPyrv_kinase-like_dom"/>
</dbReference>
<dbReference type="InterPro" id="IPR040442">
    <property type="entry name" value="Pyrv_kinase-like_dom_sf"/>
</dbReference>
<dbReference type="NCBIfam" id="TIGR00222">
    <property type="entry name" value="panB"/>
    <property type="match status" value="1"/>
</dbReference>
<dbReference type="NCBIfam" id="NF001452">
    <property type="entry name" value="PRK00311.1"/>
    <property type="match status" value="1"/>
</dbReference>
<dbReference type="PANTHER" id="PTHR20881">
    <property type="entry name" value="3-METHYL-2-OXOBUTANOATE HYDROXYMETHYLTRANSFERASE"/>
    <property type="match status" value="1"/>
</dbReference>
<dbReference type="PANTHER" id="PTHR20881:SF0">
    <property type="entry name" value="3-METHYL-2-OXOBUTANOATE HYDROXYMETHYLTRANSFERASE"/>
    <property type="match status" value="1"/>
</dbReference>
<dbReference type="Pfam" id="PF02548">
    <property type="entry name" value="Pantoate_transf"/>
    <property type="match status" value="1"/>
</dbReference>
<dbReference type="PIRSF" id="PIRSF000388">
    <property type="entry name" value="Pantoate_hydroxy_MeTrfase"/>
    <property type="match status" value="1"/>
</dbReference>
<dbReference type="SUPFAM" id="SSF51621">
    <property type="entry name" value="Phosphoenolpyruvate/pyruvate domain"/>
    <property type="match status" value="1"/>
</dbReference>
<reference key="1">
    <citation type="submission" date="2008-08" db="EMBL/GenBank/DDBJ databases">
        <title>Complete sequence of Acidithiobacillus ferrooxidans ATCC 53993.</title>
        <authorList>
            <person name="Lucas S."/>
            <person name="Copeland A."/>
            <person name="Lapidus A."/>
            <person name="Glavina del Rio T."/>
            <person name="Dalin E."/>
            <person name="Tice H."/>
            <person name="Bruce D."/>
            <person name="Goodwin L."/>
            <person name="Pitluck S."/>
            <person name="Sims D."/>
            <person name="Brettin T."/>
            <person name="Detter J.C."/>
            <person name="Han C."/>
            <person name="Kuske C.R."/>
            <person name="Larimer F."/>
            <person name="Land M."/>
            <person name="Hauser L."/>
            <person name="Kyrpides N."/>
            <person name="Lykidis A."/>
            <person name="Borole A.P."/>
        </authorList>
    </citation>
    <scope>NUCLEOTIDE SEQUENCE [LARGE SCALE GENOMIC DNA]</scope>
    <source>
        <strain>ATCC 53993 / BNL-5-31</strain>
    </source>
</reference>
<name>PANB_ACIF5</name>
<proteinExistence type="inferred from homology"/>
<comment type="function">
    <text evidence="1">Catalyzes the reversible reaction in which hydroxymethyl group from 5,10-methylenetetrahydrofolate is transferred onto alpha-ketoisovalerate to form ketopantoate.</text>
</comment>
<comment type="catalytic activity">
    <reaction evidence="1">
        <text>3-methyl-2-oxobutanoate + (6R)-5,10-methylene-5,6,7,8-tetrahydrofolate + H2O = 2-dehydropantoate + (6S)-5,6,7,8-tetrahydrofolate</text>
        <dbReference type="Rhea" id="RHEA:11824"/>
        <dbReference type="ChEBI" id="CHEBI:11561"/>
        <dbReference type="ChEBI" id="CHEBI:11851"/>
        <dbReference type="ChEBI" id="CHEBI:15377"/>
        <dbReference type="ChEBI" id="CHEBI:15636"/>
        <dbReference type="ChEBI" id="CHEBI:57453"/>
        <dbReference type="EC" id="2.1.2.11"/>
    </reaction>
</comment>
<comment type="cofactor">
    <cofactor evidence="1">
        <name>Mg(2+)</name>
        <dbReference type="ChEBI" id="CHEBI:18420"/>
    </cofactor>
    <text evidence="1">Binds 1 Mg(2+) ion per subunit.</text>
</comment>
<comment type="pathway">
    <text evidence="1">Cofactor biosynthesis; (R)-pantothenate biosynthesis; (R)-pantoate from 3-methyl-2-oxobutanoate: step 1/2.</text>
</comment>
<comment type="subunit">
    <text evidence="1">Homodecamer; pentamer of dimers.</text>
</comment>
<comment type="subcellular location">
    <subcellularLocation>
        <location evidence="1">Cytoplasm</location>
    </subcellularLocation>
</comment>
<comment type="similarity">
    <text evidence="1">Belongs to the PanB family.</text>
</comment>
<gene>
    <name evidence="1" type="primary">panB</name>
    <name type="ordered locus">Lferr_1447</name>
</gene>
<organism>
    <name type="scientific">Acidithiobacillus ferrooxidans (strain ATCC 53993 / BNL-5-31)</name>
    <name type="common">Leptospirillum ferrooxidans (ATCC 53993)</name>
    <dbReference type="NCBI Taxonomy" id="380394"/>
    <lineage>
        <taxon>Bacteria</taxon>
        <taxon>Pseudomonadati</taxon>
        <taxon>Pseudomonadota</taxon>
        <taxon>Acidithiobacillia</taxon>
        <taxon>Acidithiobacillales</taxon>
        <taxon>Acidithiobacillaceae</taxon>
        <taxon>Acidithiobacillus</taxon>
    </lineage>
</organism>
<protein>
    <recommendedName>
        <fullName evidence="1">3-methyl-2-oxobutanoate hydroxymethyltransferase</fullName>
        <ecNumber evidence="1">2.1.2.11</ecNumber>
    </recommendedName>
    <alternativeName>
        <fullName evidence="1">Ketopantoate hydroxymethyltransferase</fullName>
        <shortName evidence="1">KPHMT</shortName>
    </alternativeName>
</protein>
<evidence type="ECO:0000255" key="1">
    <source>
        <dbReference type="HAMAP-Rule" id="MF_00156"/>
    </source>
</evidence>
<feature type="chain" id="PRO_1000096936" description="3-methyl-2-oxobutanoate hydroxymethyltransferase">
    <location>
        <begin position="1"/>
        <end position="261"/>
    </location>
</feature>
<feature type="active site" description="Proton acceptor" evidence="1">
    <location>
        <position position="181"/>
    </location>
</feature>
<feature type="binding site" evidence="1">
    <location>
        <begin position="44"/>
        <end position="45"/>
    </location>
    <ligand>
        <name>3-methyl-2-oxobutanoate</name>
        <dbReference type="ChEBI" id="CHEBI:11851"/>
    </ligand>
</feature>
<feature type="binding site" evidence="1">
    <location>
        <position position="44"/>
    </location>
    <ligand>
        <name>Mg(2+)</name>
        <dbReference type="ChEBI" id="CHEBI:18420"/>
    </ligand>
</feature>
<feature type="binding site" evidence="1">
    <location>
        <position position="83"/>
    </location>
    <ligand>
        <name>3-methyl-2-oxobutanoate</name>
        <dbReference type="ChEBI" id="CHEBI:11851"/>
    </ligand>
</feature>
<feature type="binding site" evidence="1">
    <location>
        <position position="83"/>
    </location>
    <ligand>
        <name>Mg(2+)</name>
        <dbReference type="ChEBI" id="CHEBI:18420"/>
    </ligand>
</feature>
<feature type="binding site" evidence="1">
    <location>
        <position position="112"/>
    </location>
    <ligand>
        <name>3-methyl-2-oxobutanoate</name>
        <dbReference type="ChEBI" id="CHEBI:11851"/>
    </ligand>
</feature>
<feature type="binding site" evidence="1">
    <location>
        <position position="114"/>
    </location>
    <ligand>
        <name>Mg(2+)</name>
        <dbReference type="ChEBI" id="CHEBI:18420"/>
    </ligand>
</feature>
<sequence length="261" mass="27743">MHKKIARWVQDKKSGIKRAVVTAYDYPFARLAAEAGVHGILVGDSLGMVVGGGSDTLGVTLEQMAYHTGMVVRGAGDCLVFADLPFGSYEKGPEQAWAAAVTLLRAGADVVKLEGGAEMASTVAFCTERGINICAHIGLTPQRVRQWGSFQRQGTDADSARRLQADAGALAEAGARFLVLEAVPDALAANITRDIAIPTIGIGAGPDTDAQVLVIHDLLGLGTESPPFARRYIEGGRIMRDALAEYVREVGNSEFPPRRKR</sequence>
<accession>B5ES07</accession>
<keyword id="KW-0963">Cytoplasm</keyword>
<keyword id="KW-0460">Magnesium</keyword>
<keyword id="KW-0479">Metal-binding</keyword>
<keyword id="KW-0566">Pantothenate biosynthesis</keyword>
<keyword id="KW-0808">Transferase</keyword>